<reference key="1">
    <citation type="journal article" date="2009" name="PLoS Biol.">
        <title>Lineage-specific biology revealed by a finished genome assembly of the mouse.</title>
        <authorList>
            <person name="Church D.M."/>
            <person name="Goodstadt L."/>
            <person name="Hillier L.W."/>
            <person name="Zody M.C."/>
            <person name="Goldstein S."/>
            <person name="She X."/>
            <person name="Bult C.J."/>
            <person name="Agarwala R."/>
            <person name="Cherry J.L."/>
            <person name="DiCuccio M."/>
            <person name="Hlavina W."/>
            <person name="Kapustin Y."/>
            <person name="Meric P."/>
            <person name="Maglott D."/>
            <person name="Birtle Z."/>
            <person name="Marques A.C."/>
            <person name="Graves T."/>
            <person name="Zhou S."/>
            <person name="Teague B."/>
            <person name="Potamousis K."/>
            <person name="Churas C."/>
            <person name="Place M."/>
            <person name="Herschleb J."/>
            <person name="Runnheim R."/>
            <person name="Forrest D."/>
            <person name="Amos-Landgraf J."/>
            <person name="Schwartz D.C."/>
            <person name="Cheng Z."/>
            <person name="Lindblad-Toh K."/>
            <person name="Eichler E.E."/>
            <person name="Ponting C.P."/>
        </authorList>
    </citation>
    <scope>NUCLEOTIDE SEQUENCE [LARGE SCALE GENOMIC DNA]</scope>
    <source>
        <strain>C57BL/6J</strain>
    </source>
</reference>
<reference key="2">
    <citation type="journal article" date="2004" name="Genome Res.">
        <title>The status, quality, and expansion of the NIH full-length cDNA project: the Mammalian Gene Collection (MGC).</title>
        <authorList>
            <consortium name="The MGC Project Team"/>
        </authorList>
    </citation>
    <scope>NUCLEOTIDE SEQUENCE [LARGE SCALE MRNA]</scope>
    <source>
        <tissue>Testis</tissue>
    </source>
</reference>
<reference key="3">
    <citation type="journal article" date="2001" name="EMBO J.">
        <title>The tripartite motif family identifies cell compartments.</title>
        <authorList>
            <person name="Reymond A."/>
            <person name="Meroni G."/>
            <person name="Fantozzi A."/>
            <person name="Merla G."/>
            <person name="Cairo S."/>
            <person name="Luzi L."/>
            <person name="Riganelli D."/>
            <person name="Zanaria E."/>
            <person name="Messali S."/>
            <person name="Cainarca S."/>
            <person name="Guffanti A."/>
            <person name="Minucci S."/>
            <person name="Pelicci P.G."/>
            <person name="Ballabio A."/>
        </authorList>
    </citation>
    <scope>NUCLEOTIDE SEQUENCE [MRNA] OF 383-477</scope>
</reference>
<reference key="4">
    <citation type="journal article" date="2010" name="Cell Death Differ.">
        <title>Trim17, a novel E3 ubiquitin-ligase, initiates neuronal apoptosis.</title>
        <authorList>
            <person name="Lassot I."/>
            <person name="Robbins I."/>
            <person name="Kristiansen M."/>
            <person name="Rahmeh R."/>
            <person name="Jaudon F."/>
            <person name="Magiera M.M."/>
            <person name="Mora S."/>
            <person name="Vanhille L."/>
            <person name="Lipkin A."/>
            <person name="Pettmann B."/>
            <person name="Ham J."/>
            <person name="Desagher S."/>
        </authorList>
    </citation>
    <scope>FUNCTION</scope>
    <scope>MUTAGENESIS OF CYS-16</scope>
    <scope>CATALYTIC ACTIVITY</scope>
    <scope>AUTO-UBIQUITINATION</scope>
</reference>
<reference key="5">
    <citation type="journal article" date="2013" name="Cell Death Differ.">
        <title>Trim17-mediated ubiquitination and degradation of Mcl-1 initiate apoptosis in neurons.</title>
        <authorList>
            <person name="Magiera M.M."/>
            <person name="Mora S."/>
            <person name="Mojsa B."/>
            <person name="Robbins I."/>
            <person name="Lassot I."/>
            <person name="Desagher S."/>
        </authorList>
    </citation>
    <scope>FUNCTION</scope>
</reference>
<reference key="6">
    <citation type="journal article" date="2015" name="Cell Death Differ.">
        <title>Control of neuronal apoptosis by reciprocal regulation of NFATc3 and Trim17.</title>
        <authorList>
            <person name="Mojsa B."/>
            <person name="Mora S."/>
            <person name="Bossowski J.P."/>
            <person name="Lassot I."/>
            <person name="Desagher S."/>
        </authorList>
    </citation>
    <scope>FUNCTION</scope>
    <scope>SUBCELLULAR LOCATION</scope>
    <scope>INTERACTION WITH NFATC3 AND NFATC4</scope>
    <scope>INDUCTION BY NFATC3 AND JUN</scope>
</reference>
<reference key="7">
    <citation type="journal article" date="2018" name="Cell Rep.">
        <title>The E3 Ubiquitin Ligases TRIM17 and TRIM41 Modulate alpha-Synuclein Expression by Regulating ZSCAN21.</title>
        <authorList>
            <person name="Lassot I."/>
            <person name="Mora S."/>
            <person name="Lesage S."/>
            <person name="Zieba B.A."/>
            <person name="Coque E."/>
            <person name="Condroyer C."/>
            <person name="Bossowski J.P."/>
            <person name="Mojsa B."/>
            <person name="Marelli C."/>
            <person name="Soulet C."/>
            <person name="Tesson C."/>
            <person name="Carballo-Carbajal I."/>
            <person name="Laguna A."/>
            <person name="Mangone G."/>
            <person name="Vila M."/>
            <person name="Brice A."/>
            <person name="Desagher S."/>
        </authorList>
    </citation>
    <scope>FUNCTION</scope>
    <scope>INTERACTION WITH TRIM41</scope>
</reference>
<protein>
    <recommendedName>
        <fullName>E3 ubiquitin-protein ligase TRIM17</fullName>
        <ecNumber evidence="6">2.3.2.27</ecNumber>
    </recommendedName>
    <alternativeName>
        <fullName evidence="10">RING-type E3 ubiquitin transferase TRIM17</fullName>
    </alternativeName>
    <alternativeName>
        <fullName>Tripartite motif-containing protein 17</fullName>
    </alternativeName>
</protein>
<accession>Q7TPM3</accession>
<accession>A2AB82</accession>
<accession>Q99PP8</accession>
<sequence length="477" mass="54863">MDAVELARRLQEEATCSICLDYFTDPVMTACGHNFCRECIQMSWEKGKVKKGKKKQKGSFPCPECREMSPQRNLRPNRLLTKVAEMARQHPGLQKRDLCQAHQEPLKLFCQDDQSPICVVCREAQEHRMHRVLPLDEAAREYKLKLEEDIKYLREEMMKTETLQAKEEQTLTEWQERVKERRERILEEFQKVVLFLVEEERRILQVLKKEEEDTLGKLQDSKASLDHQSRSLDLILLQLEERSQQEPLQMLQDVKDTLNRKESFSVQYPEVVLPAAIKTLCRVPGQIEVLKSFQEDVMPDPSSAYPYLLLYESRQRRYLSPPPEGSAPYSKDRFVAYPCAVGQKSFSSGRHYWEVGMNLTGDALWALGVCRDNVSRKDRVLKSPENGFWVVQLSKGKKQLSLLPNSTLVTLTEPPSHMGIFLDFQAGEVSFYSVNDGSHLHSFSQAAFPGPLLPFFCLGAPKSGQMVISTVTMWVKG</sequence>
<proteinExistence type="evidence at protein level"/>
<comment type="function">
    <text evidence="1 6 7 8 9">E3 ubiquitin ligase that plays important roles in the regulation of neuronal apoptosis, selective autophagy or cell proliferation (PubMed:20559321, PubMed:22976837, PubMed:25215946). Stimulates the degradation of kinetochore ZW10 interacting protein ZWINT in a proteasome-dependent manner, leading to negative regulation of cell proliferation. Inhibits autophagic degradation of diverse known targets while contributing to autophagy of midbodies. Autophagy-inhibitory activity involves MCL1, which TRIM17 assembles into complexes with the key autophagy regulator BECN1 (By similarity). Controls neuronal apoptosis by mediating ubiquitination and degradation of MCL1 to initiate neuronal death (PubMed:22976837). In addition, regulates NFAT transcription factors NFATC3 and NFATC4 activities by preventing their nuclear localization, thus inhibiting their transcriptional activities (PubMed:25215946). Decreases TRIM41-mediated degradation of ZSCAN2 thereby stimulating alpha-synuclein/SNCA transcription in neuronal cells (PubMed:30485814). Prevents the E3 ubiquitin-ligase activity of TRIM28 and its interaction with anti-apoptotic BCL2A1, blocking TRIM28 from ubiquitinating BCL2A1 (By similarity).</text>
</comment>
<comment type="catalytic activity">
    <reaction evidence="6">
        <text>S-ubiquitinyl-[E2 ubiquitin-conjugating enzyme]-L-cysteine + [acceptor protein]-L-lysine = [E2 ubiquitin-conjugating enzyme]-L-cysteine + N(6)-ubiquitinyl-[acceptor protein]-L-lysine.</text>
        <dbReference type="EC" id="2.3.2.27"/>
    </reaction>
</comment>
<comment type="pathway">
    <text>Protein modification; protein ubiquitination.</text>
</comment>
<comment type="subunit">
    <text evidence="1 8">Interacts (via coiled coil) with TRIM44 (via coiled coil). Interacts with TRIM28; this interaction prevents TRIM28 activity on BCL2A1 (By similarity). Interacts with TRIM41; this interaction prevents TRIM41 activity on ZSCAN2 (By similarity). Interacts with BECN1 (By similarity). Interacts with NFATC3 and NFATC4; these interactions prevent NFATC3 and NFATC4 nuclear localization (PubMed:25215946).</text>
</comment>
<comment type="subcellular location">
    <subcellularLocation>
        <location evidence="1">Cytoplasm</location>
    </subcellularLocation>
    <subcellularLocation>
        <location evidence="1">Lysosome</location>
    </subcellularLocation>
</comment>
<comment type="tissue specificity">
    <text>Almost exclusively in the testis.</text>
</comment>
<comment type="induction">
    <text evidence="8">By NFATC3 and JUN cooperation during neuronal apoptosis.</text>
</comment>
<comment type="PTM">
    <text evidence="6">Auto-ubiquitinated.</text>
</comment>
<comment type="similarity">
    <text evidence="10">Belongs to the TRIM/RBCC family.</text>
</comment>
<gene>
    <name type="primary">Trim17</name>
</gene>
<dbReference type="EC" id="2.3.2.27" evidence="6"/>
<dbReference type="EMBL" id="AL662809">
    <property type="status" value="NOT_ANNOTATED_CDS"/>
    <property type="molecule type" value="Genomic_DNA"/>
</dbReference>
<dbReference type="EMBL" id="BC055112">
    <property type="protein sequence ID" value="AAH55112.1"/>
    <property type="molecule type" value="mRNA"/>
</dbReference>
<dbReference type="EMBL" id="AF220135">
    <property type="protein sequence ID" value="AAG53508.1"/>
    <property type="molecule type" value="mRNA"/>
</dbReference>
<dbReference type="CCDS" id="CCDS24756.1"/>
<dbReference type="RefSeq" id="NP_112449.1">
    <property type="nucleotide sequence ID" value="NM_031172.3"/>
</dbReference>
<dbReference type="RefSeq" id="XP_006533874.1">
    <property type="nucleotide sequence ID" value="XM_006533811.4"/>
</dbReference>
<dbReference type="RefSeq" id="XP_006533875.1">
    <property type="nucleotide sequence ID" value="XM_006533812.5"/>
</dbReference>
<dbReference type="RefSeq" id="XP_011247459.1">
    <property type="nucleotide sequence ID" value="XM_011249157.4"/>
</dbReference>
<dbReference type="SMR" id="Q7TPM3"/>
<dbReference type="BioGRID" id="208111">
    <property type="interactions" value="5"/>
</dbReference>
<dbReference type="FunCoup" id="Q7TPM3">
    <property type="interactions" value="95"/>
</dbReference>
<dbReference type="STRING" id="10090.ENSMUSP00000074639"/>
<dbReference type="PhosphoSitePlus" id="Q7TPM3"/>
<dbReference type="SwissPalm" id="Q7TPM3"/>
<dbReference type="jPOST" id="Q7TPM3"/>
<dbReference type="PaxDb" id="10090-ENSMUSP00000074639"/>
<dbReference type="ProteomicsDB" id="298295"/>
<dbReference type="Antibodypedia" id="20781">
    <property type="antibodies" value="157 antibodies from 24 providers"/>
</dbReference>
<dbReference type="DNASU" id="56631"/>
<dbReference type="Ensembl" id="ENSMUST00000075141.7">
    <property type="protein sequence ID" value="ENSMUSP00000074639.7"/>
    <property type="gene ID" value="ENSMUSG00000036964.15"/>
</dbReference>
<dbReference type="GeneID" id="56631"/>
<dbReference type="KEGG" id="mmu:56631"/>
<dbReference type="UCSC" id="uc007jcv.1">
    <property type="organism name" value="mouse"/>
</dbReference>
<dbReference type="AGR" id="MGI:1861440"/>
<dbReference type="CTD" id="51127"/>
<dbReference type="MGI" id="MGI:1861440">
    <property type="gene designation" value="Trim17"/>
</dbReference>
<dbReference type="VEuPathDB" id="HostDB:ENSMUSG00000036964"/>
<dbReference type="eggNOG" id="KOG2177">
    <property type="taxonomic scope" value="Eukaryota"/>
</dbReference>
<dbReference type="GeneTree" id="ENSGT00940000162155"/>
<dbReference type="HOGENOM" id="CLU_013137_0_3_1"/>
<dbReference type="InParanoid" id="Q7TPM3"/>
<dbReference type="OMA" id="YPCVVGQ"/>
<dbReference type="OrthoDB" id="654191at2759"/>
<dbReference type="PhylomeDB" id="Q7TPM3"/>
<dbReference type="TreeFam" id="TF338674"/>
<dbReference type="UniPathway" id="UPA00143"/>
<dbReference type="BioGRID-ORCS" id="56631">
    <property type="hits" value="1 hit in 76 CRISPR screens"/>
</dbReference>
<dbReference type="ChiTaRS" id="Trim17">
    <property type="organism name" value="mouse"/>
</dbReference>
<dbReference type="PRO" id="PR:Q7TPM3"/>
<dbReference type="Proteomes" id="UP000000589">
    <property type="component" value="Chromosome 11"/>
</dbReference>
<dbReference type="RNAct" id="Q7TPM3">
    <property type="molecule type" value="protein"/>
</dbReference>
<dbReference type="Bgee" id="ENSMUSG00000036964">
    <property type="expression patterns" value="Expressed in seminiferous tubule of testis and 48 other cell types or tissues"/>
</dbReference>
<dbReference type="ExpressionAtlas" id="Q7TPM3">
    <property type="expression patterns" value="baseline and differential"/>
</dbReference>
<dbReference type="GO" id="GO:0005764">
    <property type="term" value="C:lysosome"/>
    <property type="evidence" value="ECO:0007669"/>
    <property type="project" value="UniProtKB-SubCell"/>
</dbReference>
<dbReference type="GO" id="GO:0030674">
    <property type="term" value="F:protein-macromolecule adaptor activity"/>
    <property type="evidence" value="ECO:0007669"/>
    <property type="project" value="Ensembl"/>
</dbReference>
<dbReference type="GO" id="GO:0004842">
    <property type="term" value="F:ubiquitin-protein transferase activity"/>
    <property type="evidence" value="ECO:0000250"/>
    <property type="project" value="UniProtKB"/>
</dbReference>
<dbReference type="GO" id="GO:0008270">
    <property type="term" value="F:zinc ion binding"/>
    <property type="evidence" value="ECO:0007669"/>
    <property type="project" value="UniProtKB-KW"/>
</dbReference>
<dbReference type="GO" id="GO:0006914">
    <property type="term" value="P:autophagy"/>
    <property type="evidence" value="ECO:0007669"/>
    <property type="project" value="Ensembl"/>
</dbReference>
<dbReference type="GO" id="GO:0051865">
    <property type="term" value="P:protein autoubiquitination"/>
    <property type="evidence" value="ECO:0007669"/>
    <property type="project" value="Ensembl"/>
</dbReference>
<dbReference type="GO" id="GO:0032880">
    <property type="term" value="P:regulation of protein localization"/>
    <property type="evidence" value="ECO:0007669"/>
    <property type="project" value="Ensembl"/>
</dbReference>
<dbReference type="CDD" id="cd19762">
    <property type="entry name" value="Bbox2_TRIM7-like"/>
    <property type="match status" value="1"/>
</dbReference>
<dbReference type="CDD" id="cd16595">
    <property type="entry name" value="RING-HC_TRIM17_C-IV"/>
    <property type="match status" value="1"/>
</dbReference>
<dbReference type="CDD" id="cd15812">
    <property type="entry name" value="SPRY_PRY_TRIM17"/>
    <property type="match status" value="1"/>
</dbReference>
<dbReference type="FunFam" id="3.30.40.10:FF:000232">
    <property type="entry name" value="E3 ubiquitin-protein ligase TRIM11"/>
    <property type="match status" value="1"/>
</dbReference>
<dbReference type="FunFam" id="2.60.120.920:FF:000057">
    <property type="entry name" value="E3 ubiquitin-protein ligase TRIM17"/>
    <property type="match status" value="1"/>
</dbReference>
<dbReference type="Gene3D" id="2.60.120.920">
    <property type="match status" value="1"/>
</dbReference>
<dbReference type="Gene3D" id="3.30.160.60">
    <property type="entry name" value="Classic Zinc Finger"/>
    <property type="match status" value="1"/>
</dbReference>
<dbReference type="Gene3D" id="3.30.40.10">
    <property type="entry name" value="Zinc/RING finger domain, C3HC4 (zinc finger)"/>
    <property type="match status" value="1"/>
</dbReference>
<dbReference type="InterPro" id="IPR001870">
    <property type="entry name" value="B30.2/SPRY"/>
</dbReference>
<dbReference type="InterPro" id="IPR043136">
    <property type="entry name" value="B30.2/SPRY_sf"/>
</dbReference>
<dbReference type="InterPro" id="IPR003879">
    <property type="entry name" value="Butyrophylin_SPRY"/>
</dbReference>
<dbReference type="InterPro" id="IPR013320">
    <property type="entry name" value="ConA-like_dom_sf"/>
</dbReference>
<dbReference type="InterPro" id="IPR006574">
    <property type="entry name" value="PRY"/>
</dbReference>
<dbReference type="InterPro" id="IPR003877">
    <property type="entry name" value="SPRY_dom"/>
</dbReference>
<dbReference type="InterPro" id="IPR050143">
    <property type="entry name" value="TRIM/RBCC"/>
</dbReference>
<dbReference type="InterPro" id="IPR035687">
    <property type="entry name" value="TRIM17_PRY/SPRY"/>
</dbReference>
<dbReference type="InterPro" id="IPR027370">
    <property type="entry name" value="Znf-RING_euk"/>
</dbReference>
<dbReference type="InterPro" id="IPR000315">
    <property type="entry name" value="Znf_B-box"/>
</dbReference>
<dbReference type="InterPro" id="IPR001841">
    <property type="entry name" value="Znf_RING"/>
</dbReference>
<dbReference type="InterPro" id="IPR013083">
    <property type="entry name" value="Znf_RING/FYVE/PHD"/>
</dbReference>
<dbReference type="InterPro" id="IPR017907">
    <property type="entry name" value="Znf_RING_CS"/>
</dbReference>
<dbReference type="PANTHER" id="PTHR24103">
    <property type="entry name" value="E3 UBIQUITIN-PROTEIN LIGASE TRIM"/>
    <property type="match status" value="1"/>
</dbReference>
<dbReference type="Pfam" id="PF00622">
    <property type="entry name" value="SPRY"/>
    <property type="match status" value="1"/>
</dbReference>
<dbReference type="Pfam" id="PF00643">
    <property type="entry name" value="zf-B_box"/>
    <property type="match status" value="1"/>
</dbReference>
<dbReference type="Pfam" id="PF13445">
    <property type="entry name" value="zf-RING_UBOX"/>
    <property type="match status" value="1"/>
</dbReference>
<dbReference type="PRINTS" id="PR01407">
    <property type="entry name" value="BUTYPHLNCDUF"/>
</dbReference>
<dbReference type="SMART" id="SM00336">
    <property type="entry name" value="BBOX"/>
    <property type="match status" value="1"/>
</dbReference>
<dbReference type="SMART" id="SM00589">
    <property type="entry name" value="PRY"/>
    <property type="match status" value="1"/>
</dbReference>
<dbReference type="SMART" id="SM00184">
    <property type="entry name" value="RING"/>
    <property type="match status" value="1"/>
</dbReference>
<dbReference type="SMART" id="SM00449">
    <property type="entry name" value="SPRY"/>
    <property type="match status" value="1"/>
</dbReference>
<dbReference type="SUPFAM" id="SSF57845">
    <property type="entry name" value="B-box zinc-binding domain"/>
    <property type="match status" value="1"/>
</dbReference>
<dbReference type="SUPFAM" id="SSF49899">
    <property type="entry name" value="Concanavalin A-like lectins/glucanases"/>
    <property type="match status" value="1"/>
</dbReference>
<dbReference type="SUPFAM" id="SSF57850">
    <property type="entry name" value="RING/U-box"/>
    <property type="match status" value="1"/>
</dbReference>
<dbReference type="PROSITE" id="PS50188">
    <property type="entry name" value="B302_SPRY"/>
    <property type="match status" value="1"/>
</dbReference>
<dbReference type="PROSITE" id="PS50119">
    <property type="entry name" value="ZF_BBOX"/>
    <property type="match status" value="1"/>
</dbReference>
<dbReference type="PROSITE" id="PS00518">
    <property type="entry name" value="ZF_RING_1"/>
    <property type="match status" value="1"/>
</dbReference>
<dbReference type="PROSITE" id="PS50089">
    <property type="entry name" value="ZF_RING_2"/>
    <property type="match status" value="1"/>
</dbReference>
<keyword id="KW-0175">Coiled coil</keyword>
<keyword id="KW-0963">Cytoplasm</keyword>
<keyword id="KW-0458">Lysosome</keyword>
<keyword id="KW-0479">Metal-binding</keyword>
<keyword id="KW-1185">Reference proteome</keyword>
<keyword id="KW-0808">Transferase</keyword>
<keyword id="KW-0832">Ubl conjugation</keyword>
<keyword id="KW-0833">Ubl conjugation pathway</keyword>
<keyword id="KW-0862">Zinc</keyword>
<keyword id="KW-0863">Zinc-finger</keyword>
<name>TRI17_MOUSE</name>
<evidence type="ECO:0000250" key="1">
    <source>
        <dbReference type="UniProtKB" id="Q9Y577"/>
    </source>
</evidence>
<evidence type="ECO:0000255" key="2"/>
<evidence type="ECO:0000255" key="3">
    <source>
        <dbReference type="PROSITE-ProRule" id="PRU00024"/>
    </source>
</evidence>
<evidence type="ECO:0000255" key="4">
    <source>
        <dbReference type="PROSITE-ProRule" id="PRU00175"/>
    </source>
</evidence>
<evidence type="ECO:0000255" key="5">
    <source>
        <dbReference type="PROSITE-ProRule" id="PRU00548"/>
    </source>
</evidence>
<evidence type="ECO:0000269" key="6">
    <source>
    </source>
</evidence>
<evidence type="ECO:0000269" key="7">
    <source>
    </source>
</evidence>
<evidence type="ECO:0000269" key="8">
    <source>
    </source>
</evidence>
<evidence type="ECO:0000269" key="9">
    <source>
    </source>
</evidence>
<evidence type="ECO:0000305" key="10"/>
<feature type="chain" id="PRO_0000056225" description="E3 ubiquitin-protein ligase TRIM17">
    <location>
        <begin position="1"/>
        <end position="477"/>
    </location>
</feature>
<feature type="domain" description="B30.2/SPRY" evidence="5">
    <location>
        <begin position="276"/>
        <end position="475"/>
    </location>
</feature>
<feature type="zinc finger region" description="RING-type" evidence="4">
    <location>
        <begin position="16"/>
        <end position="66"/>
    </location>
</feature>
<feature type="zinc finger region" description="B box-type" evidence="3">
    <location>
        <begin position="94"/>
        <end position="135"/>
    </location>
</feature>
<feature type="coiled-coil region" evidence="2">
    <location>
        <begin position="135"/>
        <end position="226"/>
    </location>
</feature>
<feature type="binding site" evidence="3">
    <location>
        <position position="99"/>
    </location>
    <ligand>
        <name>Zn(2+)</name>
        <dbReference type="ChEBI" id="CHEBI:29105"/>
    </ligand>
</feature>
<feature type="binding site" evidence="3">
    <location>
        <position position="102"/>
    </location>
    <ligand>
        <name>Zn(2+)</name>
        <dbReference type="ChEBI" id="CHEBI:29105"/>
    </ligand>
</feature>
<feature type="binding site" evidence="3">
    <location>
        <position position="121"/>
    </location>
    <ligand>
        <name>Zn(2+)</name>
        <dbReference type="ChEBI" id="CHEBI:29105"/>
    </ligand>
</feature>
<feature type="binding site" evidence="3">
    <location>
        <position position="127"/>
    </location>
    <ligand>
        <name>Zn(2+)</name>
        <dbReference type="ChEBI" id="CHEBI:29105"/>
    </ligand>
</feature>
<feature type="mutagenesis site" description="Complete loss of auto-ubiquitination." evidence="6">
    <original>C</original>
    <variation>A</variation>
    <location>
        <position position="16"/>
    </location>
</feature>
<organism>
    <name type="scientific">Mus musculus</name>
    <name type="common">Mouse</name>
    <dbReference type="NCBI Taxonomy" id="10090"/>
    <lineage>
        <taxon>Eukaryota</taxon>
        <taxon>Metazoa</taxon>
        <taxon>Chordata</taxon>
        <taxon>Craniata</taxon>
        <taxon>Vertebrata</taxon>
        <taxon>Euteleostomi</taxon>
        <taxon>Mammalia</taxon>
        <taxon>Eutheria</taxon>
        <taxon>Euarchontoglires</taxon>
        <taxon>Glires</taxon>
        <taxon>Rodentia</taxon>
        <taxon>Myomorpha</taxon>
        <taxon>Muroidea</taxon>
        <taxon>Muridae</taxon>
        <taxon>Murinae</taxon>
        <taxon>Mus</taxon>
        <taxon>Mus</taxon>
    </lineage>
</organism>